<dbReference type="EC" id="6.3.3.3" evidence="1"/>
<dbReference type="EMBL" id="CP000817">
    <property type="protein sequence ID" value="ACA40958.1"/>
    <property type="molecule type" value="Genomic_DNA"/>
</dbReference>
<dbReference type="RefSeq" id="WP_012295019.1">
    <property type="nucleotide sequence ID" value="NC_010382.1"/>
</dbReference>
<dbReference type="SMR" id="B1HRT5"/>
<dbReference type="EnsemblBacteria" id="ACA40958">
    <property type="protein sequence ID" value="ACA40958"/>
    <property type="gene ID" value="Bsph_3470"/>
</dbReference>
<dbReference type="KEGG" id="lsp:Bsph_3470"/>
<dbReference type="HOGENOM" id="CLU_072551_3_0_9"/>
<dbReference type="UniPathway" id="UPA00078">
    <property type="reaction ID" value="UER00161"/>
</dbReference>
<dbReference type="Proteomes" id="UP000002164">
    <property type="component" value="Chromosome"/>
</dbReference>
<dbReference type="GO" id="GO:0005829">
    <property type="term" value="C:cytosol"/>
    <property type="evidence" value="ECO:0007669"/>
    <property type="project" value="TreeGrafter"/>
</dbReference>
<dbReference type="GO" id="GO:0005524">
    <property type="term" value="F:ATP binding"/>
    <property type="evidence" value="ECO:0007669"/>
    <property type="project" value="UniProtKB-UniRule"/>
</dbReference>
<dbReference type="GO" id="GO:0004141">
    <property type="term" value="F:dethiobiotin synthase activity"/>
    <property type="evidence" value="ECO:0007669"/>
    <property type="project" value="UniProtKB-UniRule"/>
</dbReference>
<dbReference type="GO" id="GO:0000287">
    <property type="term" value="F:magnesium ion binding"/>
    <property type="evidence" value="ECO:0007669"/>
    <property type="project" value="UniProtKB-UniRule"/>
</dbReference>
<dbReference type="GO" id="GO:0009102">
    <property type="term" value="P:biotin biosynthetic process"/>
    <property type="evidence" value="ECO:0007669"/>
    <property type="project" value="UniProtKB-UniRule"/>
</dbReference>
<dbReference type="CDD" id="cd03109">
    <property type="entry name" value="DTBS"/>
    <property type="match status" value="1"/>
</dbReference>
<dbReference type="Gene3D" id="3.40.50.300">
    <property type="entry name" value="P-loop containing nucleotide triphosphate hydrolases"/>
    <property type="match status" value="1"/>
</dbReference>
<dbReference type="HAMAP" id="MF_00336">
    <property type="entry name" value="BioD"/>
    <property type="match status" value="1"/>
</dbReference>
<dbReference type="InterPro" id="IPR004472">
    <property type="entry name" value="DTB_synth_BioD"/>
</dbReference>
<dbReference type="InterPro" id="IPR027417">
    <property type="entry name" value="P-loop_NTPase"/>
</dbReference>
<dbReference type="NCBIfam" id="TIGR00347">
    <property type="entry name" value="bioD"/>
    <property type="match status" value="1"/>
</dbReference>
<dbReference type="PANTHER" id="PTHR43210:SF2">
    <property type="entry name" value="ATP-DEPENDENT DETHIOBIOTIN SYNTHETASE BIOD 2"/>
    <property type="match status" value="1"/>
</dbReference>
<dbReference type="PANTHER" id="PTHR43210">
    <property type="entry name" value="DETHIOBIOTIN SYNTHETASE"/>
    <property type="match status" value="1"/>
</dbReference>
<dbReference type="Pfam" id="PF13500">
    <property type="entry name" value="AAA_26"/>
    <property type="match status" value="1"/>
</dbReference>
<dbReference type="PIRSF" id="PIRSF006755">
    <property type="entry name" value="DTB_synth"/>
    <property type="match status" value="1"/>
</dbReference>
<dbReference type="SUPFAM" id="SSF52540">
    <property type="entry name" value="P-loop containing nucleoside triphosphate hydrolases"/>
    <property type="match status" value="1"/>
</dbReference>
<reference key="1">
    <citation type="journal article" date="2008" name="J. Bacteriol.">
        <title>Complete genome sequence of the mosquitocidal bacterium Bacillus sphaericus C3-41 and comparison with those of closely related Bacillus species.</title>
        <authorList>
            <person name="Hu X."/>
            <person name="Fan W."/>
            <person name="Han B."/>
            <person name="Liu H."/>
            <person name="Zheng D."/>
            <person name="Li Q."/>
            <person name="Dong W."/>
            <person name="Yan J."/>
            <person name="Gao M."/>
            <person name="Berry C."/>
            <person name="Yuan Z."/>
        </authorList>
    </citation>
    <scope>NUCLEOTIDE SEQUENCE [LARGE SCALE GENOMIC DNA]</scope>
    <source>
        <strain>C3-41</strain>
    </source>
</reference>
<accession>B1HRT5</accession>
<proteinExistence type="inferred from homology"/>
<sequence>MQHFWVVGTDTDVGKTIVTTLLMCQLQRLGLEIIPFKPVQTGEIYDNLHSYYADTAMYEKYSLQVLNKEHMNGYSFKEAASPHFAAQLEGQQIDVENLLQRIQFLQESYDVVIAEGAGGLFVPLDVQQSITLLDVIVSSKLPVVLVTRTTLGTINHTLLTMEALQSRQIDVLGIVFNGDTGSMMEQDNIHTILQYHPLPYAIIPRLQDISELANINITHTTLFERLYGNDPRNN</sequence>
<gene>
    <name evidence="1" type="primary">bioD</name>
    <name type="ordered locus">Bsph_3470</name>
</gene>
<organism>
    <name type="scientific">Lysinibacillus sphaericus (strain C3-41)</name>
    <dbReference type="NCBI Taxonomy" id="444177"/>
    <lineage>
        <taxon>Bacteria</taxon>
        <taxon>Bacillati</taxon>
        <taxon>Bacillota</taxon>
        <taxon>Bacilli</taxon>
        <taxon>Bacillales</taxon>
        <taxon>Bacillaceae</taxon>
        <taxon>Lysinibacillus</taxon>
    </lineage>
</organism>
<name>BIOD_LYSSC</name>
<protein>
    <recommendedName>
        <fullName evidence="1">ATP-dependent dethiobiotin synthetase BioD</fullName>
        <ecNumber evidence="1">6.3.3.3</ecNumber>
    </recommendedName>
    <alternativeName>
        <fullName evidence="1">DTB synthetase</fullName>
        <shortName evidence="1">DTBS</shortName>
    </alternativeName>
    <alternativeName>
        <fullName evidence="1">Dethiobiotin synthase</fullName>
    </alternativeName>
</protein>
<keyword id="KW-0067">ATP-binding</keyword>
<keyword id="KW-0093">Biotin biosynthesis</keyword>
<keyword id="KW-0963">Cytoplasm</keyword>
<keyword id="KW-0436">Ligase</keyword>
<keyword id="KW-0460">Magnesium</keyword>
<keyword id="KW-0479">Metal-binding</keyword>
<keyword id="KW-0547">Nucleotide-binding</keyword>
<evidence type="ECO:0000255" key="1">
    <source>
        <dbReference type="HAMAP-Rule" id="MF_00336"/>
    </source>
</evidence>
<feature type="chain" id="PRO_1000119875" description="ATP-dependent dethiobiotin synthetase BioD">
    <location>
        <begin position="1"/>
        <end position="234"/>
    </location>
</feature>
<feature type="active site" evidence="1">
    <location>
        <position position="37"/>
    </location>
</feature>
<feature type="binding site" evidence="1">
    <location>
        <begin position="12"/>
        <end position="17"/>
    </location>
    <ligand>
        <name>ATP</name>
        <dbReference type="ChEBI" id="CHEBI:30616"/>
    </ligand>
</feature>
<feature type="binding site" evidence="1">
    <location>
        <position position="16"/>
    </location>
    <ligand>
        <name>Mg(2+)</name>
        <dbReference type="ChEBI" id="CHEBI:18420"/>
    </ligand>
</feature>
<feature type="binding site" evidence="1">
    <location>
        <position position="41"/>
    </location>
    <ligand>
        <name>substrate</name>
    </ligand>
</feature>
<feature type="binding site" evidence="1">
    <location>
        <position position="54"/>
    </location>
    <ligand>
        <name>ATP</name>
        <dbReference type="ChEBI" id="CHEBI:30616"/>
    </ligand>
</feature>
<feature type="binding site" evidence="1">
    <location>
        <position position="54"/>
    </location>
    <ligand>
        <name>Mg(2+)</name>
        <dbReference type="ChEBI" id="CHEBI:18420"/>
    </ligand>
</feature>
<feature type="binding site" evidence="1">
    <location>
        <begin position="115"/>
        <end position="118"/>
    </location>
    <ligand>
        <name>ATP</name>
        <dbReference type="ChEBI" id="CHEBI:30616"/>
    </ligand>
</feature>
<feature type="binding site" evidence="1">
    <location>
        <position position="115"/>
    </location>
    <ligand>
        <name>Mg(2+)</name>
        <dbReference type="ChEBI" id="CHEBI:18420"/>
    </ligand>
</feature>
<comment type="function">
    <text evidence="1">Catalyzes a mechanistically unusual reaction, the ATP-dependent insertion of CO2 between the N7 and N8 nitrogen atoms of 7,8-diaminopelargonic acid (DAPA, also called 7,8-diammoniononanoate) to form a ureido ring.</text>
</comment>
<comment type="catalytic activity">
    <reaction evidence="1">
        <text>(7R,8S)-7,8-diammoniononanoate + CO2 + ATP = (4R,5S)-dethiobiotin + ADP + phosphate + 3 H(+)</text>
        <dbReference type="Rhea" id="RHEA:15805"/>
        <dbReference type="ChEBI" id="CHEBI:15378"/>
        <dbReference type="ChEBI" id="CHEBI:16526"/>
        <dbReference type="ChEBI" id="CHEBI:30616"/>
        <dbReference type="ChEBI" id="CHEBI:43474"/>
        <dbReference type="ChEBI" id="CHEBI:149469"/>
        <dbReference type="ChEBI" id="CHEBI:149473"/>
        <dbReference type="ChEBI" id="CHEBI:456216"/>
        <dbReference type="EC" id="6.3.3.3"/>
    </reaction>
</comment>
<comment type="cofactor">
    <cofactor evidence="1">
        <name>Mg(2+)</name>
        <dbReference type="ChEBI" id="CHEBI:18420"/>
    </cofactor>
</comment>
<comment type="pathway">
    <text evidence="1">Cofactor biosynthesis; biotin biosynthesis; biotin from 7,8-diaminononanoate: step 1/2.</text>
</comment>
<comment type="subunit">
    <text evidence="1">Homodimer.</text>
</comment>
<comment type="subcellular location">
    <subcellularLocation>
        <location evidence="1">Cytoplasm</location>
    </subcellularLocation>
</comment>
<comment type="similarity">
    <text evidence="1">Belongs to the dethiobiotin synthetase family.</text>
</comment>